<sequence>MSRYRFRKARSNWPMGQNDSRWEPPPVRLNELVTATEPEEIPLPKLEDQPYEGGPLNMTGFMYHPRTKKYYKMTQDPTMPQGFSKSDLDRMEKAREAKFQANRPRFTSGSFIQRPVFKPITTLMDDLTLGRCTMARVERHIHESRLLNCNPKPSFTIKTPIEHYDVSGCEFLDVSETGDRIVGTFTVNPNGVAAKHSAVYVFEVDSIGDTIQSESSRREAYQLLPIRSRSNNAGFNTLGLTVRPMLRDDGFSDEPSYLDYAVTRYNSFIVDQTLARVDADVTCMLTVTANDTITRNGNVCSYCTVHLEPLAELSDPEAMPTLNSPIYNKSWREKGNIWSVGWNAPQMSIGFGLESCFRVENLLTDRSFLMSSRKRNVLNHCFSADGNLVYMGLRNDNVIKSDLRMNRDHITGQLNGACNTTFVRVLEKTRPECVVTEGFDSIIRIWDFRWPKNPMMEMHGHSNNCNRLNVFFDKEERFVFAAGSDGYVRGWSLTSGDMLCSVKTPNHSNPIFPRAVYSDCWGGRPGNSAIIMAVGDSMRVHSLEL</sequence>
<dbReference type="EMBL" id="FO080618">
    <property type="protein sequence ID" value="CCD83373.1"/>
    <property type="molecule type" value="Genomic_DNA"/>
</dbReference>
<dbReference type="PIR" id="B88479">
    <property type="entry name" value="B88479"/>
</dbReference>
<dbReference type="RefSeq" id="NP_498382.2">
    <property type="nucleotide sequence ID" value="NM_065981.4"/>
</dbReference>
<dbReference type="SMR" id="Q09392"/>
<dbReference type="BioGRID" id="41112">
    <property type="interactions" value="1"/>
</dbReference>
<dbReference type="FunCoup" id="Q09392">
    <property type="interactions" value="203"/>
</dbReference>
<dbReference type="STRING" id="6239.F47D12.9a.4"/>
<dbReference type="PaxDb" id="6239-F47D12.9a.1"/>
<dbReference type="PeptideAtlas" id="Q09392"/>
<dbReference type="EnsemblMetazoa" id="F47D12.9a.1">
    <property type="protein sequence ID" value="F47D12.9a.1"/>
    <property type="gene ID" value="WBGene00018564"/>
</dbReference>
<dbReference type="EnsemblMetazoa" id="F47D12.9a.2">
    <property type="protein sequence ID" value="F47D12.9a.2"/>
    <property type="gene ID" value="WBGene00018564"/>
</dbReference>
<dbReference type="GeneID" id="175892"/>
<dbReference type="KEGG" id="cel:CELE_F47D12.9"/>
<dbReference type="UCSC" id="F47D12.9b.2">
    <property type="organism name" value="c. elegans"/>
</dbReference>
<dbReference type="AGR" id="WB:WBGene00018564"/>
<dbReference type="CTD" id="175892"/>
<dbReference type="WormBase" id="F47D12.9a">
    <property type="protein sequence ID" value="CE01952"/>
    <property type="gene ID" value="WBGene00018564"/>
</dbReference>
<dbReference type="eggNOG" id="KOG2695">
    <property type="taxonomic scope" value="Eukaryota"/>
</dbReference>
<dbReference type="InParanoid" id="Q09392"/>
<dbReference type="OMA" id="TRIWSFH"/>
<dbReference type="OrthoDB" id="128867at2759"/>
<dbReference type="Reactome" id="R-CEL-8951664">
    <property type="pathway name" value="Neddylation"/>
</dbReference>
<dbReference type="PRO" id="PR:Q09392"/>
<dbReference type="Proteomes" id="UP000001940">
    <property type="component" value="Chromosome III"/>
</dbReference>
<dbReference type="Bgee" id="WBGene00018564">
    <property type="expression patterns" value="Expressed in germ line (C elegans) and 4 other cell types or tissues"/>
</dbReference>
<dbReference type="ExpressionAtlas" id="Q09392">
    <property type="expression patterns" value="baseline and differential"/>
</dbReference>
<dbReference type="GO" id="GO:0080008">
    <property type="term" value="C:Cul4-RING E3 ubiquitin ligase complex"/>
    <property type="evidence" value="ECO:0000318"/>
    <property type="project" value="GO_Central"/>
</dbReference>
<dbReference type="Gene3D" id="2.130.10.10">
    <property type="entry name" value="YVTN repeat-like/Quinoprotein amine dehydrogenase"/>
    <property type="match status" value="1"/>
</dbReference>
<dbReference type="InterPro" id="IPR052254">
    <property type="entry name" value="CUL4-DDB1_E3_ligase_receptor"/>
</dbReference>
<dbReference type="InterPro" id="IPR015943">
    <property type="entry name" value="WD40/YVTN_repeat-like_dom_sf"/>
</dbReference>
<dbReference type="InterPro" id="IPR036322">
    <property type="entry name" value="WD40_repeat_dom_sf"/>
</dbReference>
<dbReference type="PANTHER" id="PTHR44472:SF1">
    <property type="entry name" value="DDB1 AND CUL4 ASSOCIATED FACTOR 4"/>
    <property type="match status" value="1"/>
</dbReference>
<dbReference type="PANTHER" id="PTHR44472">
    <property type="entry name" value="DDB1- AND CUL4-ASSOCIATED FACTOR 4-RELATED"/>
    <property type="match status" value="1"/>
</dbReference>
<dbReference type="Pfam" id="PF23761">
    <property type="entry name" value="Beta-prop_DCAF4"/>
    <property type="match status" value="1"/>
</dbReference>
<dbReference type="SUPFAM" id="SSF50978">
    <property type="entry name" value="WD40 repeat-like"/>
    <property type="match status" value="1"/>
</dbReference>
<dbReference type="PROSITE" id="PS50294">
    <property type="entry name" value="WD_REPEATS_REGION"/>
    <property type="match status" value="1"/>
</dbReference>
<reference key="1">
    <citation type="journal article" date="1998" name="Science">
        <title>Genome sequence of the nematode C. elegans: a platform for investigating biology.</title>
        <authorList>
            <consortium name="The C. elegans sequencing consortium"/>
        </authorList>
    </citation>
    <scope>NUCLEOTIDE SEQUENCE [LARGE SCALE GENOMIC DNA]</scope>
    <source>
        <strain>Bristol N2</strain>
    </source>
</reference>
<accession>Q09392</accession>
<proteinExistence type="predicted"/>
<gene>
    <name type="ORF">F47D12.9</name>
</gene>
<name>YR49_CAEEL</name>
<feature type="chain" id="PRO_0000051508" description="Uncharacterized WD repeat-containing protein F47D12.9">
    <location>
        <begin position="1"/>
        <end position="545"/>
    </location>
</feature>
<feature type="repeat" description="WD 1">
    <location>
        <begin position="417"/>
        <end position="456"/>
    </location>
</feature>
<feature type="repeat" description="WD 2">
    <location>
        <begin position="460"/>
        <end position="501"/>
    </location>
</feature>
<feature type="region of interest" description="Disordered" evidence="1">
    <location>
        <begin position="1"/>
        <end position="25"/>
    </location>
</feature>
<feature type="compositionally biased region" description="Basic residues" evidence="1">
    <location>
        <begin position="1"/>
        <end position="10"/>
    </location>
</feature>
<evidence type="ECO:0000256" key="1">
    <source>
        <dbReference type="SAM" id="MobiDB-lite"/>
    </source>
</evidence>
<protein>
    <recommendedName>
        <fullName>Uncharacterized WD repeat-containing protein F47D12.9</fullName>
    </recommendedName>
</protein>
<keyword id="KW-1185">Reference proteome</keyword>
<keyword id="KW-0677">Repeat</keyword>
<keyword id="KW-0853">WD repeat</keyword>
<organism>
    <name type="scientific">Caenorhabditis elegans</name>
    <dbReference type="NCBI Taxonomy" id="6239"/>
    <lineage>
        <taxon>Eukaryota</taxon>
        <taxon>Metazoa</taxon>
        <taxon>Ecdysozoa</taxon>
        <taxon>Nematoda</taxon>
        <taxon>Chromadorea</taxon>
        <taxon>Rhabditida</taxon>
        <taxon>Rhabditina</taxon>
        <taxon>Rhabditomorpha</taxon>
        <taxon>Rhabditoidea</taxon>
        <taxon>Rhabditidae</taxon>
        <taxon>Peloderinae</taxon>
        <taxon>Caenorhabditis</taxon>
    </lineage>
</organism>